<feature type="chain" id="PRO_0000192042" description="Hydroxymethylpyrimidine/phosphomethylpyrimidine kinase THI21">
    <location>
        <begin position="1"/>
        <end position="551"/>
    </location>
</feature>
<feature type="binding site" evidence="1">
    <location>
        <position position="64"/>
    </location>
    <ligand>
        <name>4-amino-5-hydroxymethyl-2-methylpyrimidine</name>
        <dbReference type="ChEBI" id="CHEBI:16892"/>
    </ligand>
</feature>
<protein>
    <recommendedName>
        <fullName>Hydroxymethylpyrimidine/phosphomethylpyrimidine kinase THI21</fullName>
        <ecNumber evidence="3">2.7.1.49</ecNumber>
        <ecNumber evidence="3">2.7.4.7</ecNumber>
    </recommendedName>
    <alternativeName>
        <fullName>Hydroxymethylpyrimidine kinase</fullName>
        <shortName>HMP kinase</shortName>
    </alternativeName>
    <alternativeName>
        <fullName>Hydroxymethylpyrimidine phosphate kinase</fullName>
        <shortName>HMP-P kinase</shortName>
        <shortName>HMP-phosphate kinase</shortName>
        <shortName>HMPP kinase</shortName>
    </alternativeName>
</protein>
<accession>Q08975</accession>
<accession>D6W3B1</accession>
<proteinExistence type="evidence at protein level"/>
<comment type="function">
    <text evidence="2">Catalyzes the phosphorylation of hydroxymethylpyrimidine phosphate (HMP-P) to HMP-PP, and also probably that of HMP to HMP-P.</text>
</comment>
<comment type="catalytic activity">
    <reaction evidence="3">
        <text>4-amino-5-hydroxymethyl-2-methylpyrimidine + ATP = 4-amino-2-methyl-5-(phosphooxymethyl)pyrimidine + ADP + H(+)</text>
        <dbReference type="Rhea" id="RHEA:23096"/>
        <dbReference type="ChEBI" id="CHEBI:15378"/>
        <dbReference type="ChEBI" id="CHEBI:16892"/>
        <dbReference type="ChEBI" id="CHEBI:30616"/>
        <dbReference type="ChEBI" id="CHEBI:58354"/>
        <dbReference type="ChEBI" id="CHEBI:456216"/>
        <dbReference type="EC" id="2.7.1.49"/>
    </reaction>
</comment>
<comment type="catalytic activity">
    <reaction evidence="3">
        <text>4-amino-2-methyl-5-(phosphooxymethyl)pyrimidine + ATP = 4-amino-2-methyl-5-(diphosphooxymethyl)pyrimidine + ADP</text>
        <dbReference type="Rhea" id="RHEA:19893"/>
        <dbReference type="ChEBI" id="CHEBI:30616"/>
        <dbReference type="ChEBI" id="CHEBI:57841"/>
        <dbReference type="ChEBI" id="CHEBI:58354"/>
        <dbReference type="ChEBI" id="CHEBI:456216"/>
        <dbReference type="EC" id="2.7.4.7"/>
    </reaction>
</comment>
<comment type="pathway">
    <text>Cofactor biosynthesis; thiamine diphosphate biosynthesis; 4-amino-2-methyl-5-diphosphomethylpyrimidine from 5-amino-1-(5-phospho-D-ribosyl)imidazole: step 2/3.</text>
</comment>
<comment type="pathway">
    <text>Cofactor biosynthesis; thiamine diphosphate biosynthesis; 4-amino-2-methyl-5-diphosphomethylpyrimidine from 5-amino-1-(5-phospho-D-ribosyl)imidazole: step 3/3.</text>
</comment>
<comment type="interaction">
    <interactant intactId="EBI-30327">
        <id>Q08975</id>
    </interactant>
    <interactant intactId="EBI-16219">
        <id>P39940</id>
        <label>RSP5</label>
    </interactant>
    <organismsDiffer>false</organismsDiffer>
    <experiments>3</experiments>
</comment>
<comment type="induction">
    <text evidence="2">By absence of thiamine.</text>
</comment>
<comment type="similarity">
    <text evidence="3">In the N-terminal section; belongs to the ThiD family.</text>
</comment>
<comment type="similarity">
    <text evidence="3">In the C-terminal section; belongs to the thiaminase-2 family.</text>
</comment>
<gene>
    <name type="primary">THI21</name>
    <name type="ordered locus">YPL258C</name>
</gene>
<evidence type="ECO:0000250" key="1"/>
<evidence type="ECO:0000269" key="2">
    <source>
    </source>
</evidence>
<evidence type="ECO:0000305" key="3"/>
<sequence length="551" mass="61334">MTYSTVNINTPPPYLALASNEKLPTVLSIAGTDPSGGAGVEADVKTITAHRCYAMTCITALNAQTPVKVYSINNTPKEVVSQILDANLQDMKCDVIKTGMLTTAAIEVLHEKLLQLGENRPKLVVDPVLVATSGSSLAGKDIASLITEKIAPFADILTPNIPECFKLLGEDREISKLRDIFEVAKDLAKITKCSNILVKGGHIPWNDEEGKYITDVLYLGAEQRFITFKGNFVNTTHTHGTGCTLASAIASNLARGYSLPQSVYGGIEYVQNAVAIGCDVTKETVKDNGPINHVYAIEIPLEKMLSDECFTASDAVHKKPVKSSLNKIPGGSFYKYLINHPKVKPHWDSYVNHDFVRKVADGSLEPKKFQFFIEQDYLYLVNYARISCIAGSKSPCLEDLEKELVIVECVRNGLCQHERRLREEFGIKDPDYLQKIQRGPALRAYCRYFNDVSRRGNWQELVIALNPCLMGYVHALTKIKDEVTAAEGSVYREWCETYSSSWCHEAMLEGEKLLNHILETYPPEKLDTLVTIYAEVCELEANFWTAALEYE</sequence>
<keyword id="KW-0067">ATP-binding</keyword>
<keyword id="KW-0418">Kinase</keyword>
<keyword id="KW-0547">Nucleotide-binding</keyword>
<keyword id="KW-1185">Reference proteome</keyword>
<keyword id="KW-0784">Thiamine biosynthesis</keyword>
<keyword id="KW-0808">Transferase</keyword>
<name>THI21_YEAST</name>
<organism>
    <name type="scientific">Saccharomyces cerevisiae (strain ATCC 204508 / S288c)</name>
    <name type="common">Baker's yeast</name>
    <dbReference type="NCBI Taxonomy" id="559292"/>
    <lineage>
        <taxon>Eukaryota</taxon>
        <taxon>Fungi</taxon>
        <taxon>Dikarya</taxon>
        <taxon>Ascomycota</taxon>
        <taxon>Saccharomycotina</taxon>
        <taxon>Saccharomycetes</taxon>
        <taxon>Saccharomycetales</taxon>
        <taxon>Saccharomycetaceae</taxon>
        <taxon>Saccharomyces</taxon>
    </lineage>
</organism>
<dbReference type="EC" id="2.7.1.49" evidence="3"/>
<dbReference type="EC" id="2.7.4.7" evidence="3"/>
<dbReference type="EMBL" id="Z73614">
    <property type="protein sequence ID" value="CAA97986.1"/>
    <property type="molecule type" value="Genomic_DNA"/>
</dbReference>
<dbReference type="EMBL" id="BK006949">
    <property type="protein sequence ID" value="DAA11177.1"/>
    <property type="molecule type" value="Genomic_DNA"/>
</dbReference>
<dbReference type="PIR" id="S65289">
    <property type="entry name" value="S65289"/>
</dbReference>
<dbReference type="RefSeq" id="NP_015065.1">
    <property type="nucleotide sequence ID" value="NM_001184072.1"/>
</dbReference>
<dbReference type="SMR" id="Q08975"/>
<dbReference type="BioGRID" id="35954">
    <property type="interactions" value="55"/>
</dbReference>
<dbReference type="DIP" id="DIP-5635N"/>
<dbReference type="FunCoup" id="Q08975">
    <property type="interactions" value="635"/>
</dbReference>
<dbReference type="IntAct" id="Q08975">
    <property type="interactions" value="41"/>
</dbReference>
<dbReference type="MINT" id="Q08975"/>
<dbReference type="STRING" id="4932.YPL258C"/>
<dbReference type="PaxDb" id="4932-YPL258C"/>
<dbReference type="PeptideAtlas" id="Q08975"/>
<dbReference type="EnsemblFungi" id="YPL258C_mRNA">
    <property type="protein sequence ID" value="YPL258C"/>
    <property type="gene ID" value="YPL258C"/>
</dbReference>
<dbReference type="GeneID" id="855870"/>
<dbReference type="KEGG" id="sce:YPL258C"/>
<dbReference type="AGR" id="SGD:S000006179"/>
<dbReference type="SGD" id="S000006179">
    <property type="gene designation" value="THI21"/>
</dbReference>
<dbReference type="VEuPathDB" id="FungiDB:YPL258C"/>
<dbReference type="eggNOG" id="KOG2598">
    <property type="taxonomic scope" value="Eukaryota"/>
</dbReference>
<dbReference type="GeneTree" id="ENSGT00940000176386"/>
<dbReference type="HOGENOM" id="CLU_020520_2_1_1"/>
<dbReference type="InParanoid" id="Q08975"/>
<dbReference type="OMA" id="SSSWCHE"/>
<dbReference type="OrthoDB" id="10028886at2759"/>
<dbReference type="BioCyc" id="MetaCyc:MONOMER3O-81"/>
<dbReference type="BioCyc" id="YEAST:MONOMER3O-81"/>
<dbReference type="UniPathway" id="UPA00060">
    <property type="reaction ID" value="UER00137"/>
</dbReference>
<dbReference type="UniPathway" id="UPA00060">
    <property type="reaction ID" value="UER00138"/>
</dbReference>
<dbReference type="BioGRID-ORCS" id="855870">
    <property type="hits" value="6 hits in 10 CRISPR screens"/>
</dbReference>
<dbReference type="PRO" id="PR:Q08975"/>
<dbReference type="Proteomes" id="UP000002311">
    <property type="component" value="Chromosome XVI"/>
</dbReference>
<dbReference type="RNAct" id="Q08975">
    <property type="molecule type" value="protein"/>
</dbReference>
<dbReference type="GO" id="GO:0005829">
    <property type="term" value="C:cytosol"/>
    <property type="evidence" value="ECO:0000318"/>
    <property type="project" value="GO_Central"/>
</dbReference>
<dbReference type="GO" id="GO:0005524">
    <property type="term" value="F:ATP binding"/>
    <property type="evidence" value="ECO:0007669"/>
    <property type="project" value="UniProtKB-KW"/>
</dbReference>
<dbReference type="GO" id="GO:0008902">
    <property type="term" value="F:hydroxymethylpyrimidine kinase activity"/>
    <property type="evidence" value="ECO:0000314"/>
    <property type="project" value="SGD"/>
</dbReference>
<dbReference type="GO" id="GO:0008972">
    <property type="term" value="F:phosphomethylpyrimidine kinase activity"/>
    <property type="evidence" value="ECO:0000314"/>
    <property type="project" value="SGD"/>
</dbReference>
<dbReference type="GO" id="GO:0050334">
    <property type="term" value="F:thiaminase activity"/>
    <property type="evidence" value="ECO:0007669"/>
    <property type="project" value="InterPro"/>
</dbReference>
<dbReference type="GO" id="GO:0009228">
    <property type="term" value="P:thiamine biosynthetic process"/>
    <property type="evidence" value="ECO:0000316"/>
    <property type="project" value="SGD"/>
</dbReference>
<dbReference type="GO" id="GO:0009229">
    <property type="term" value="P:thiamine diphosphate biosynthetic process"/>
    <property type="evidence" value="ECO:0007669"/>
    <property type="project" value="UniProtKB-UniPathway"/>
</dbReference>
<dbReference type="CDD" id="cd01169">
    <property type="entry name" value="HMPP_kinase"/>
    <property type="match status" value="1"/>
</dbReference>
<dbReference type="CDD" id="cd19367">
    <property type="entry name" value="TenA_C_ScTHI20-like"/>
    <property type="match status" value="1"/>
</dbReference>
<dbReference type="FunFam" id="1.20.910.10:FF:000003">
    <property type="entry name" value="Hydroxymethylpyrimidine/phosphomethylpyrimidine kinase THI20"/>
    <property type="match status" value="1"/>
</dbReference>
<dbReference type="FunFam" id="3.40.1190.20:FF:000038">
    <property type="entry name" value="Hydroxymethylpyrimidine/phosphomethylpyrimidine kinase THI20"/>
    <property type="match status" value="1"/>
</dbReference>
<dbReference type="Gene3D" id="3.40.1190.20">
    <property type="match status" value="1"/>
</dbReference>
<dbReference type="Gene3D" id="1.20.910.10">
    <property type="entry name" value="Heme oxygenase-like"/>
    <property type="match status" value="1"/>
</dbReference>
<dbReference type="InterPro" id="IPR016084">
    <property type="entry name" value="Haem_Oase-like_multi-hlx"/>
</dbReference>
<dbReference type="InterPro" id="IPR004399">
    <property type="entry name" value="HMP/HMP-P_kinase_dom"/>
</dbReference>
<dbReference type="InterPro" id="IPR013749">
    <property type="entry name" value="PM/HMP-P_kinase-1"/>
</dbReference>
<dbReference type="InterPro" id="IPR029056">
    <property type="entry name" value="Ribokinase-like"/>
</dbReference>
<dbReference type="InterPro" id="IPR004305">
    <property type="entry name" value="Thiaminase-2/PQQC"/>
</dbReference>
<dbReference type="InterPro" id="IPR027574">
    <property type="entry name" value="Thiaminase_II"/>
</dbReference>
<dbReference type="NCBIfam" id="TIGR00097">
    <property type="entry name" value="HMP-P_kinase"/>
    <property type="match status" value="1"/>
</dbReference>
<dbReference type="NCBIfam" id="TIGR04306">
    <property type="entry name" value="salvage_TenA"/>
    <property type="match status" value="1"/>
</dbReference>
<dbReference type="PANTHER" id="PTHR20858:SF17">
    <property type="entry name" value="HYDROXYMETHYLPYRIMIDINE_PHOSPHOMETHYLPYRIMIDINE KINASE THI20-RELATED"/>
    <property type="match status" value="1"/>
</dbReference>
<dbReference type="PANTHER" id="PTHR20858">
    <property type="entry name" value="PHOSPHOMETHYLPYRIMIDINE KINASE"/>
    <property type="match status" value="1"/>
</dbReference>
<dbReference type="Pfam" id="PF08543">
    <property type="entry name" value="Phos_pyr_kin"/>
    <property type="match status" value="1"/>
</dbReference>
<dbReference type="Pfam" id="PF03070">
    <property type="entry name" value="TENA_THI-4"/>
    <property type="match status" value="1"/>
</dbReference>
<dbReference type="SUPFAM" id="SSF48613">
    <property type="entry name" value="Heme oxygenase-like"/>
    <property type="match status" value="1"/>
</dbReference>
<dbReference type="SUPFAM" id="SSF53613">
    <property type="entry name" value="Ribokinase-like"/>
    <property type="match status" value="1"/>
</dbReference>
<reference key="1">
    <citation type="journal article" date="1997" name="Nature">
        <title>The nucleotide sequence of Saccharomyces cerevisiae chromosome XVI.</title>
        <authorList>
            <person name="Bussey H."/>
            <person name="Storms R.K."/>
            <person name="Ahmed A."/>
            <person name="Albermann K."/>
            <person name="Allen E."/>
            <person name="Ansorge W."/>
            <person name="Araujo R."/>
            <person name="Aparicio A."/>
            <person name="Barrell B.G."/>
            <person name="Badcock K."/>
            <person name="Benes V."/>
            <person name="Botstein D."/>
            <person name="Bowman S."/>
            <person name="Brueckner M."/>
            <person name="Carpenter J."/>
            <person name="Cherry J.M."/>
            <person name="Chung E."/>
            <person name="Churcher C.M."/>
            <person name="Coster F."/>
            <person name="Davis K."/>
            <person name="Davis R.W."/>
            <person name="Dietrich F.S."/>
            <person name="Delius H."/>
            <person name="DiPaolo T."/>
            <person name="Dubois E."/>
            <person name="Duesterhoeft A."/>
            <person name="Duncan M."/>
            <person name="Floeth M."/>
            <person name="Fortin N."/>
            <person name="Friesen J.D."/>
            <person name="Fritz C."/>
            <person name="Goffeau A."/>
            <person name="Hall J."/>
            <person name="Hebling U."/>
            <person name="Heumann K."/>
            <person name="Hilbert H."/>
            <person name="Hillier L.W."/>
            <person name="Hunicke-Smith S."/>
            <person name="Hyman R.W."/>
            <person name="Johnston M."/>
            <person name="Kalman S."/>
            <person name="Kleine K."/>
            <person name="Komp C."/>
            <person name="Kurdi O."/>
            <person name="Lashkari D."/>
            <person name="Lew H."/>
            <person name="Lin A."/>
            <person name="Lin D."/>
            <person name="Louis E.J."/>
            <person name="Marathe R."/>
            <person name="Messenguy F."/>
            <person name="Mewes H.-W."/>
            <person name="Mirtipati S."/>
            <person name="Moestl D."/>
            <person name="Mueller-Auer S."/>
            <person name="Namath A."/>
            <person name="Nentwich U."/>
            <person name="Oefner P."/>
            <person name="Pearson D."/>
            <person name="Petel F.X."/>
            <person name="Pohl T.M."/>
            <person name="Purnelle B."/>
            <person name="Rajandream M.A."/>
            <person name="Rechmann S."/>
            <person name="Rieger M."/>
            <person name="Riles L."/>
            <person name="Roberts D."/>
            <person name="Schaefer M."/>
            <person name="Scharfe M."/>
            <person name="Scherens B."/>
            <person name="Schramm S."/>
            <person name="Schroeder M."/>
            <person name="Sdicu A.-M."/>
            <person name="Tettelin H."/>
            <person name="Urrestarazu L.A."/>
            <person name="Ushinsky S."/>
            <person name="Vierendeels F."/>
            <person name="Vissers S."/>
            <person name="Voss H."/>
            <person name="Walsh S.V."/>
            <person name="Wambutt R."/>
            <person name="Wang Y."/>
            <person name="Wedler E."/>
            <person name="Wedler H."/>
            <person name="Winnett E."/>
            <person name="Zhong W.-W."/>
            <person name="Zollner A."/>
            <person name="Vo D.H."/>
            <person name="Hani J."/>
        </authorList>
    </citation>
    <scope>NUCLEOTIDE SEQUENCE [LARGE SCALE GENOMIC DNA]</scope>
    <source>
        <strain>ATCC 204508 / S288c</strain>
    </source>
</reference>
<reference key="2">
    <citation type="journal article" date="2014" name="G3 (Bethesda)">
        <title>The reference genome sequence of Saccharomyces cerevisiae: Then and now.</title>
        <authorList>
            <person name="Engel S.R."/>
            <person name="Dietrich F.S."/>
            <person name="Fisk D.G."/>
            <person name="Binkley G."/>
            <person name="Balakrishnan R."/>
            <person name="Costanzo M.C."/>
            <person name="Dwight S.S."/>
            <person name="Hitz B.C."/>
            <person name="Karra K."/>
            <person name="Nash R.S."/>
            <person name="Weng S."/>
            <person name="Wong E.D."/>
            <person name="Lloyd P."/>
            <person name="Skrzypek M.S."/>
            <person name="Miyasato S.R."/>
            <person name="Simison M."/>
            <person name="Cherry J.M."/>
        </authorList>
    </citation>
    <scope>GENOME REANNOTATION</scope>
    <source>
        <strain>ATCC 204508 / S288c</strain>
    </source>
</reference>
<reference key="3">
    <citation type="journal article" date="1999" name="Mol. Microbiol.">
        <title>Genetic redundancy and gene fusion in the genome of the Baker's yeast Saccharomyces cerevisiae: functional characterization of a three-member gene family involved in the thiamine biosynthetic pathway.</title>
        <authorList>
            <person name="Llorente B."/>
            <person name="Fairhead C."/>
            <person name="Dujon B."/>
        </authorList>
    </citation>
    <scope>FUNCTION AS A HMPP KINASE</scope>
    <scope>INDUCTION</scope>
</reference>